<proteinExistence type="inferred from homology"/>
<accession>Q1MFI6</accession>
<organism>
    <name type="scientific">Rhizobium johnstonii (strain DSM 114642 / LMG 32736 / 3841)</name>
    <name type="common">Rhizobium leguminosarum bv. viciae</name>
    <dbReference type="NCBI Taxonomy" id="216596"/>
    <lineage>
        <taxon>Bacteria</taxon>
        <taxon>Pseudomonadati</taxon>
        <taxon>Pseudomonadota</taxon>
        <taxon>Alphaproteobacteria</taxon>
        <taxon>Hyphomicrobiales</taxon>
        <taxon>Rhizobiaceae</taxon>
        <taxon>Rhizobium/Agrobacterium group</taxon>
        <taxon>Rhizobium</taxon>
        <taxon>Rhizobium johnstonii</taxon>
    </lineage>
</organism>
<name>SYL1_RHIJ3</name>
<protein>
    <recommendedName>
        <fullName evidence="1">Leucine--tRNA ligase 1</fullName>
        <ecNumber evidence="1">6.1.1.4</ecNumber>
    </recommendedName>
    <alternativeName>
        <fullName evidence="1">Leucyl-tRNA synthetase 1</fullName>
        <shortName evidence="1">LeuRS 1</shortName>
    </alternativeName>
</protein>
<comment type="catalytic activity">
    <reaction evidence="1">
        <text>tRNA(Leu) + L-leucine + ATP = L-leucyl-tRNA(Leu) + AMP + diphosphate</text>
        <dbReference type="Rhea" id="RHEA:11688"/>
        <dbReference type="Rhea" id="RHEA-COMP:9613"/>
        <dbReference type="Rhea" id="RHEA-COMP:9622"/>
        <dbReference type="ChEBI" id="CHEBI:30616"/>
        <dbReference type="ChEBI" id="CHEBI:33019"/>
        <dbReference type="ChEBI" id="CHEBI:57427"/>
        <dbReference type="ChEBI" id="CHEBI:78442"/>
        <dbReference type="ChEBI" id="CHEBI:78494"/>
        <dbReference type="ChEBI" id="CHEBI:456215"/>
        <dbReference type="EC" id="6.1.1.4"/>
    </reaction>
</comment>
<comment type="subcellular location">
    <subcellularLocation>
        <location evidence="1">Cytoplasm</location>
    </subcellularLocation>
</comment>
<comment type="similarity">
    <text evidence="1">Belongs to the class-I aminoacyl-tRNA synthetase family.</text>
</comment>
<evidence type="ECO:0000255" key="1">
    <source>
        <dbReference type="HAMAP-Rule" id="MF_00049"/>
    </source>
</evidence>
<gene>
    <name evidence="1" type="primary">leuS1</name>
    <name type="ordered locus">RL2798</name>
</gene>
<dbReference type="EC" id="6.1.1.4" evidence="1"/>
<dbReference type="EMBL" id="AM236080">
    <property type="protein sequence ID" value="CAK08288.1"/>
    <property type="molecule type" value="Genomic_DNA"/>
</dbReference>
<dbReference type="SMR" id="Q1MFI6"/>
<dbReference type="EnsemblBacteria" id="CAK08288">
    <property type="protein sequence ID" value="CAK08288"/>
    <property type="gene ID" value="RL2798"/>
</dbReference>
<dbReference type="KEGG" id="rle:RL2798"/>
<dbReference type="eggNOG" id="COG0495">
    <property type="taxonomic scope" value="Bacteria"/>
</dbReference>
<dbReference type="HOGENOM" id="CLU_004427_0_0_5"/>
<dbReference type="Proteomes" id="UP000006575">
    <property type="component" value="Chromosome"/>
</dbReference>
<dbReference type="GO" id="GO:0005829">
    <property type="term" value="C:cytosol"/>
    <property type="evidence" value="ECO:0007669"/>
    <property type="project" value="TreeGrafter"/>
</dbReference>
<dbReference type="GO" id="GO:0002161">
    <property type="term" value="F:aminoacyl-tRNA deacylase activity"/>
    <property type="evidence" value="ECO:0007669"/>
    <property type="project" value="InterPro"/>
</dbReference>
<dbReference type="GO" id="GO:0005524">
    <property type="term" value="F:ATP binding"/>
    <property type="evidence" value="ECO:0007669"/>
    <property type="project" value="UniProtKB-UniRule"/>
</dbReference>
<dbReference type="GO" id="GO:0004823">
    <property type="term" value="F:leucine-tRNA ligase activity"/>
    <property type="evidence" value="ECO:0007669"/>
    <property type="project" value="UniProtKB-UniRule"/>
</dbReference>
<dbReference type="GO" id="GO:0006429">
    <property type="term" value="P:leucyl-tRNA aminoacylation"/>
    <property type="evidence" value="ECO:0007669"/>
    <property type="project" value="UniProtKB-UniRule"/>
</dbReference>
<dbReference type="CDD" id="cd07958">
    <property type="entry name" value="Anticodon_Ia_Leu_BEm"/>
    <property type="match status" value="1"/>
</dbReference>
<dbReference type="CDD" id="cd00812">
    <property type="entry name" value="LeuRS_core"/>
    <property type="match status" value="1"/>
</dbReference>
<dbReference type="FunFam" id="3.40.50.620:FF:000056">
    <property type="entry name" value="Leucine--tRNA ligase"/>
    <property type="match status" value="1"/>
</dbReference>
<dbReference type="FunFam" id="3.40.50.620:FF:000077">
    <property type="entry name" value="Leucine--tRNA ligase"/>
    <property type="match status" value="1"/>
</dbReference>
<dbReference type="FunFam" id="1.10.730.10:FF:000011">
    <property type="entry name" value="Leucine--tRNA ligase chloroplastic/mitochondrial"/>
    <property type="match status" value="1"/>
</dbReference>
<dbReference type="Gene3D" id="3.40.50.620">
    <property type="entry name" value="HUPs"/>
    <property type="match status" value="2"/>
</dbReference>
<dbReference type="Gene3D" id="1.10.730.10">
    <property type="entry name" value="Isoleucyl-tRNA Synthetase, Domain 1"/>
    <property type="match status" value="1"/>
</dbReference>
<dbReference type="HAMAP" id="MF_00049_B">
    <property type="entry name" value="Leu_tRNA_synth_B"/>
    <property type="match status" value="1"/>
</dbReference>
<dbReference type="InterPro" id="IPR001412">
    <property type="entry name" value="aa-tRNA-synth_I_CS"/>
</dbReference>
<dbReference type="InterPro" id="IPR002300">
    <property type="entry name" value="aa-tRNA-synth_Ia"/>
</dbReference>
<dbReference type="InterPro" id="IPR002302">
    <property type="entry name" value="Leu-tRNA-ligase"/>
</dbReference>
<dbReference type="InterPro" id="IPR025709">
    <property type="entry name" value="Leu_tRNA-synth_edit"/>
</dbReference>
<dbReference type="InterPro" id="IPR013155">
    <property type="entry name" value="M/V/L/I-tRNA-synth_anticd-bd"/>
</dbReference>
<dbReference type="InterPro" id="IPR015413">
    <property type="entry name" value="Methionyl/Leucyl_tRNA_Synth"/>
</dbReference>
<dbReference type="InterPro" id="IPR014729">
    <property type="entry name" value="Rossmann-like_a/b/a_fold"/>
</dbReference>
<dbReference type="InterPro" id="IPR009080">
    <property type="entry name" value="tRNAsynth_Ia_anticodon-bd"/>
</dbReference>
<dbReference type="InterPro" id="IPR009008">
    <property type="entry name" value="Val/Leu/Ile-tRNA-synth_edit"/>
</dbReference>
<dbReference type="NCBIfam" id="TIGR00396">
    <property type="entry name" value="leuS_bact"/>
    <property type="match status" value="1"/>
</dbReference>
<dbReference type="PANTHER" id="PTHR43740:SF2">
    <property type="entry name" value="LEUCINE--TRNA LIGASE, MITOCHONDRIAL"/>
    <property type="match status" value="1"/>
</dbReference>
<dbReference type="PANTHER" id="PTHR43740">
    <property type="entry name" value="LEUCYL-TRNA SYNTHETASE"/>
    <property type="match status" value="1"/>
</dbReference>
<dbReference type="Pfam" id="PF08264">
    <property type="entry name" value="Anticodon_1"/>
    <property type="match status" value="1"/>
</dbReference>
<dbReference type="Pfam" id="PF00133">
    <property type="entry name" value="tRNA-synt_1"/>
    <property type="match status" value="1"/>
</dbReference>
<dbReference type="Pfam" id="PF13603">
    <property type="entry name" value="tRNA-synt_1_2"/>
    <property type="match status" value="1"/>
</dbReference>
<dbReference type="Pfam" id="PF09334">
    <property type="entry name" value="tRNA-synt_1g"/>
    <property type="match status" value="1"/>
</dbReference>
<dbReference type="PRINTS" id="PR00985">
    <property type="entry name" value="TRNASYNTHLEU"/>
</dbReference>
<dbReference type="SUPFAM" id="SSF47323">
    <property type="entry name" value="Anticodon-binding domain of a subclass of class I aminoacyl-tRNA synthetases"/>
    <property type="match status" value="1"/>
</dbReference>
<dbReference type="SUPFAM" id="SSF52374">
    <property type="entry name" value="Nucleotidylyl transferase"/>
    <property type="match status" value="1"/>
</dbReference>
<dbReference type="SUPFAM" id="SSF50677">
    <property type="entry name" value="ValRS/IleRS/LeuRS editing domain"/>
    <property type="match status" value="1"/>
</dbReference>
<dbReference type="PROSITE" id="PS00178">
    <property type="entry name" value="AA_TRNA_LIGASE_I"/>
    <property type="match status" value="1"/>
</dbReference>
<keyword id="KW-0030">Aminoacyl-tRNA synthetase</keyword>
<keyword id="KW-0067">ATP-binding</keyword>
<keyword id="KW-0963">Cytoplasm</keyword>
<keyword id="KW-0436">Ligase</keyword>
<keyword id="KW-0547">Nucleotide-binding</keyword>
<keyword id="KW-0648">Protein biosynthesis</keyword>
<feature type="chain" id="PRO_0000334802" description="Leucine--tRNA ligase 1">
    <location>
        <begin position="1"/>
        <end position="838"/>
    </location>
</feature>
<feature type="short sequence motif" description="'HIGH' region">
    <location>
        <begin position="40"/>
        <end position="51"/>
    </location>
</feature>
<feature type="short sequence motif" description="'KMSKS' region">
    <location>
        <begin position="608"/>
        <end position="612"/>
    </location>
</feature>
<feature type="binding site" evidence="1">
    <location>
        <position position="611"/>
    </location>
    <ligand>
        <name>ATP</name>
        <dbReference type="ChEBI" id="CHEBI:30616"/>
    </ligand>
</feature>
<sequence>MPYDPTKIEPKWQAYWAGHHIFRVEIDPARPKFYALDMFPYPSGAGLHVGHPLGYTATDIMCRYKRMRGFNVLHPMGWDSFGLPAERHAMRTGVHPDITTKRNIETFRGQVQRLGFSYDWSREFATTDPAYVRWTQWIFLKLFENGLAYQAEVAVNWCPAQNAVLADEEVKDGRYVETGDPVIRRRMRQWMLRITAYADRLLQGLDGLDWPENLKAMQRNWIGRSEGAEIRFPLEHGKGVITVFTTRPETLFGASYILLAPEHPAVAAIVEPEMSEAVAAYIAEAEGLEETVRADAGREKTGVFTGAYAINPANGARLPVWVADYVLAGYGTGALMAVPAHDARDYAFAHSHELPIIRVIDSEADIEKGAYEGEGAMVNSGFLSGLGSPEARSAIVAWLQANGTGWPKVMYRLRDWLFSRQRYWGEPIPVLHLADGSVMPLPEECLPLLPPELDDYAPTPDGEPPLARAQAWVETIVPGTDIPARRETNTMPQWAGSCWYYLRFLDPENTSEPVGREAERYWMPVDLYVGGAEHAVLHLLYARFWHKVLYDIGVVSTEEPFQRLFNQGMILAHSYRDAAGRYYAPSSVVEEEGRWFAGSVEVQRAVEKMSKSQLNVVNPDDVVHQFGADALRLYEMFMGPLDAAKPWQTAGVIGVRRFLERAWRIVCDESDGLSPVVLEAAPSPQLLRLRHQTVKTVTADIEAIRFNTAVSRLMELANALTAEAARPREVVETFVLLLAPFAPHIAEELWSKLGHGETLTWVSWPTFDPALIEMETREYVVQINGKVRHRFEAAADLGEALLAAARSEPSVMALLDGKTVVKEVLVPGRLVNFVVEDL</sequence>
<reference key="1">
    <citation type="journal article" date="2006" name="Genome Biol.">
        <title>The genome of Rhizobium leguminosarum has recognizable core and accessory components.</title>
        <authorList>
            <person name="Young J.P.W."/>
            <person name="Crossman L.C."/>
            <person name="Johnston A.W.B."/>
            <person name="Thomson N.R."/>
            <person name="Ghazoui Z.F."/>
            <person name="Hull K.H."/>
            <person name="Wexler M."/>
            <person name="Curson A.R.J."/>
            <person name="Todd J.D."/>
            <person name="Poole P.S."/>
            <person name="Mauchline T.H."/>
            <person name="East A.K."/>
            <person name="Quail M.A."/>
            <person name="Churcher C."/>
            <person name="Arrowsmith C."/>
            <person name="Cherevach I."/>
            <person name="Chillingworth T."/>
            <person name="Clarke K."/>
            <person name="Cronin A."/>
            <person name="Davis P."/>
            <person name="Fraser A."/>
            <person name="Hance Z."/>
            <person name="Hauser H."/>
            <person name="Jagels K."/>
            <person name="Moule S."/>
            <person name="Mungall K."/>
            <person name="Norbertczak H."/>
            <person name="Rabbinowitsch E."/>
            <person name="Sanders M."/>
            <person name="Simmonds M."/>
            <person name="Whitehead S."/>
            <person name="Parkhill J."/>
        </authorList>
    </citation>
    <scope>NUCLEOTIDE SEQUENCE [LARGE SCALE GENOMIC DNA]</scope>
    <source>
        <strain>DSM 114642 / LMG 32736 / 3841</strain>
    </source>
</reference>